<name>BH012_ARATH</name>
<gene>
    <name type="primary">BHLH12</name>
    <name type="synonym">EN58</name>
    <name type="synonym">MYC1</name>
    <name type="ordered locus">At4g00480</name>
    <name type="ORF">F6N23.22</name>
</gene>
<organism>
    <name type="scientific">Arabidopsis thaliana</name>
    <name type="common">Mouse-ear cress</name>
    <dbReference type="NCBI Taxonomy" id="3702"/>
    <lineage>
        <taxon>Eukaryota</taxon>
        <taxon>Viridiplantae</taxon>
        <taxon>Streptophyta</taxon>
        <taxon>Embryophyta</taxon>
        <taxon>Tracheophyta</taxon>
        <taxon>Spermatophyta</taxon>
        <taxon>Magnoliopsida</taxon>
        <taxon>eudicotyledons</taxon>
        <taxon>Gunneridae</taxon>
        <taxon>Pentapetalae</taxon>
        <taxon>rosids</taxon>
        <taxon>malvids</taxon>
        <taxon>Brassicales</taxon>
        <taxon>Brassicaceae</taxon>
        <taxon>Camelineae</taxon>
        <taxon>Arabidopsis</taxon>
    </lineage>
</organism>
<accession>Q8W2F1</accession>
<accession>O65257</accession>
<accession>P93651</accession>
<evidence type="ECO:0000255" key="1">
    <source>
        <dbReference type="PROSITE-ProRule" id="PRU00981"/>
    </source>
</evidence>
<evidence type="ECO:0000256" key="2">
    <source>
        <dbReference type="SAM" id="MobiDB-lite"/>
    </source>
</evidence>
<evidence type="ECO:0000269" key="3">
    <source>
    </source>
</evidence>
<evidence type="ECO:0000269" key="4">
    <source>
    </source>
</evidence>
<evidence type="ECO:0000269" key="5">
    <source>
    </source>
</evidence>
<evidence type="ECO:0000305" key="6"/>
<sequence>MSLTMADGVEAAAGRSKRQNSLLRKQLALAVRSVQWSYAIFWSSSLTQPGVLEWGEGCYNGDMKKRKKSYESHYKYGLQKSKELRKLYLSMLEGDSGTTVSTTHDNLNDDDDNCHSTSMMLSPDDLSDEEWYYLVSMSYVFSPSQCLPGRASATGETIWLCNAQYAENKLFSRSLLARSASIQTVVCFPYLGGVIELGVTELISEDHNLLRNIKSCLMEISAHQDNDDEKKMEIKISEEKHQLPLGISDEDLHYKRTISTVLNYSADRSGKNDKNIRHRQPNIVTSEPGSSFLRWKQCEQQVSGFVQKKKSQNVLRKILHDVPLMHTKRMFPSQNSGLNQDDPSDRRKENEKFSVLRTMVPTVNEVDKESILNNTIKYLQELEARVEELESCMGSVNFVERQRKTTENLNDSVLIEETSGNYDDSTKIDDNSGETEQVTVFRDKTHLRVKLKETEVVIEVRCSYRDYIVADIMETLSNLHMDAFSVRSHTLNKFLTLNLKAKFRGAAVASVGMIKRELRRVIGDLF</sequence>
<dbReference type="EMBL" id="D83511">
    <property type="protein sequence ID" value="BAA11933.1"/>
    <property type="molecule type" value="Genomic_DNA"/>
</dbReference>
<dbReference type="EMBL" id="AF251697">
    <property type="protein sequence ID" value="AAL55719.1"/>
    <property type="molecule type" value="mRNA"/>
</dbReference>
<dbReference type="EMBL" id="AF058919">
    <property type="protein sequence ID" value="AAC13623.1"/>
    <property type="status" value="ALT_SEQ"/>
    <property type="molecule type" value="Genomic_DNA"/>
</dbReference>
<dbReference type="EMBL" id="AL161472">
    <property type="protein sequence ID" value="CAB80857.1"/>
    <property type="status" value="ALT_SEQ"/>
    <property type="molecule type" value="Genomic_DNA"/>
</dbReference>
<dbReference type="EMBL" id="CP002687">
    <property type="protein sequence ID" value="AEE81887.1"/>
    <property type="molecule type" value="Genomic_DNA"/>
</dbReference>
<dbReference type="PIR" id="T01212">
    <property type="entry name" value="T01212"/>
</dbReference>
<dbReference type="RefSeq" id="NP_191957.2">
    <molecule id="Q8W2F1-1"/>
    <property type="nucleotide sequence ID" value="NM_116272.4"/>
</dbReference>
<dbReference type="SMR" id="Q8W2F1"/>
<dbReference type="BioGRID" id="13256">
    <property type="interactions" value="14"/>
</dbReference>
<dbReference type="DIP" id="DIP-38469N"/>
<dbReference type="FunCoup" id="Q8W2F1">
    <property type="interactions" value="3"/>
</dbReference>
<dbReference type="IntAct" id="Q8W2F1">
    <property type="interactions" value="14"/>
</dbReference>
<dbReference type="STRING" id="3702.Q8W2F1"/>
<dbReference type="PaxDb" id="3702-AT4G00480.2"/>
<dbReference type="EnsemblPlants" id="AT4G00480.1">
    <molecule id="Q8W2F1-1"/>
    <property type="protein sequence ID" value="AT4G00480.1"/>
    <property type="gene ID" value="AT4G00480"/>
</dbReference>
<dbReference type="GeneID" id="827965"/>
<dbReference type="Gramene" id="AT4G00480.1">
    <molecule id="Q8W2F1-1"/>
    <property type="protein sequence ID" value="AT4G00480.1"/>
    <property type="gene ID" value="AT4G00480"/>
</dbReference>
<dbReference type="KEGG" id="ath:AT4G00480"/>
<dbReference type="Araport" id="AT4G00480"/>
<dbReference type="TAIR" id="AT4G00480">
    <property type="gene designation" value="ATMYC1"/>
</dbReference>
<dbReference type="eggNOG" id="ENOG502QT7W">
    <property type="taxonomic scope" value="Eukaryota"/>
</dbReference>
<dbReference type="HOGENOM" id="CLU_023211_1_1_1"/>
<dbReference type="InParanoid" id="Q8W2F1"/>
<dbReference type="OMA" id="CISEAFV"/>
<dbReference type="PhylomeDB" id="Q8W2F1"/>
<dbReference type="PRO" id="PR:Q8W2F1"/>
<dbReference type="Proteomes" id="UP000006548">
    <property type="component" value="Chromosome 4"/>
</dbReference>
<dbReference type="ExpressionAtlas" id="Q8W2F1">
    <property type="expression patterns" value="baseline and differential"/>
</dbReference>
<dbReference type="GO" id="GO:0005634">
    <property type="term" value="C:nucleus"/>
    <property type="evidence" value="ECO:0007669"/>
    <property type="project" value="UniProtKB-SubCell"/>
</dbReference>
<dbReference type="GO" id="GO:0003677">
    <property type="term" value="F:DNA binding"/>
    <property type="evidence" value="ECO:0007669"/>
    <property type="project" value="UniProtKB-KW"/>
</dbReference>
<dbReference type="GO" id="GO:0046983">
    <property type="term" value="F:protein dimerization activity"/>
    <property type="evidence" value="ECO:0007669"/>
    <property type="project" value="InterPro"/>
</dbReference>
<dbReference type="GO" id="GO:0009889">
    <property type="term" value="P:regulation of biosynthetic process"/>
    <property type="evidence" value="ECO:0007669"/>
    <property type="project" value="UniProtKB-ARBA"/>
</dbReference>
<dbReference type="GO" id="GO:0080090">
    <property type="term" value="P:regulation of primary metabolic process"/>
    <property type="evidence" value="ECO:0007669"/>
    <property type="project" value="UniProtKB-ARBA"/>
</dbReference>
<dbReference type="CDD" id="cd18918">
    <property type="entry name" value="bHLH_AtMYC1_like"/>
    <property type="match status" value="1"/>
</dbReference>
<dbReference type="FunFam" id="4.10.280.10:FF:000135">
    <property type="entry name" value="Transcription factor MYC1"/>
    <property type="match status" value="1"/>
</dbReference>
<dbReference type="Gene3D" id="4.10.280.10">
    <property type="entry name" value="Helix-loop-helix DNA-binding domain"/>
    <property type="match status" value="1"/>
</dbReference>
<dbReference type="InterPro" id="IPR054502">
    <property type="entry name" value="bHLH-TF_ACT-like_plant"/>
</dbReference>
<dbReference type="InterPro" id="IPR011598">
    <property type="entry name" value="bHLH_dom"/>
</dbReference>
<dbReference type="InterPro" id="IPR036638">
    <property type="entry name" value="HLH_DNA-bd_sf"/>
</dbReference>
<dbReference type="InterPro" id="IPR025610">
    <property type="entry name" value="MYC/MYB_N"/>
</dbReference>
<dbReference type="InterPro" id="IPR045896">
    <property type="entry name" value="MYC1-like_bHLH"/>
</dbReference>
<dbReference type="PANTHER" id="PTHR46266:SF1">
    <property type="entry name" value="TRANSCRIPTION FACTOR MYC1"/>
    <property type="match status" value="1"/>
</dbReference>
<dbReference type="PANTHER" id="PTHR46266">
    <property type="entry name" value="TRANSCRIPTION FACTOR TT8"/>
    <property type="match status" value="1"/>
</dbReference>
<dbReference type="Pfam" id="PF14215">
    <property type="entry name" value="bHLH-MYC_N"/>
    <property type="match status" value="1"/>
</dbReference>
<dbReference type="Pfam" id="PF22754">
    <property type="entry name" value="bHLH-TF_ACT-like_plant"/>
    <property type="match status" value="1"/>
</dbReference>
<dbReference type="Pfam" id="PF00010">
    <property type="entry name" value="HLH"/>
    <property type="match status" value="1"/>
</dbReference>
<dbReference type="SMART" id="SM00353">
    <property type="entry name" value="HLH"/>
    <property type="match status" value="1"/>
</dbReference>
<dbReference type="SUPFAM" id="SSF47459">
    <property type="entry name" value="HLH, helix-loop-helix DNA-binding domain"/>
    <property type="match status" value="1"/>
</dbReference>
<dbReference type="PROSITE" id="PS50888">
    <property type="entry name" value="BHLH"/>
    <property type="match status" value="1"/>
</dbReference>
<protein>
    <recommendedName>
        <fullName>Transcription factor MYC1</fullName>
        <shortName>AtMYC1</shortName>
    </recommendedName>
    <alternativeName>
        <fullName>Basic helix-loop-helix protein 12</fullName>
        <shortName>AtbHLH12</shortName>
        <shortName>bHLH 12</shortName>
    </alternativeName>
    <alternativeName>
        <fullName>Transcription factor EN 58</fullName>
    </alternativeName>
    <alternativeName>
        <fullName>bHLH transcription factor bHLH012</fullName>
    </alternativeName>
</protein>
<reference key="1">
    <citation type="journal article" date="1996" name="Plant Mol. Biol.">
        <title>Molecular cloning and characterization of a gene that encodes a MYC-related protein in Arabidopsis.</title>
        <authorList>
            <person name="Urao T."/>
            <person name="Yamaguchi-Shinozaki K."/>
            <person name="Mitsukawa N."/>
            <person name="Shibata D."/>
            <person name="Shinozaki K."/>
        </authorList>
    </citation>
    <scope>NUCLEOTIDE SEQUENCE [GENOMIC DNA]</scope>
    <scope>TISSUE SPECIFICITY</scope>
    <source>
        <strain>cv. Columbia</strain>
    </source>
</reference>
<reference key="2">
    <citation type="journal article" date="2003" name="Mol. Biol. Evol.">
        <title>The basic helix-loop-helix transcription factor family in plants: a genome-wide study of protein structure and functional diversity.</title>
        <authorList>
            <person name="Heim M.A."/>
            <person name="Jakoby M."/>
            <person name="Werber M."/>
            <person name="Martin C."/>
            <person name="Weisshaar B."/>
            <person name="Bailey P.C."/>
        </authorList>
    </citation>
    <scope>NUCLEOTIDE SEQUENCE [MRNA]</scope>
    <scope>INDUCTION</scope>
    <scope>TISSUE SPECIFICITY</scope>
    <scope>GENE FAMILY</scope>
    <scope>NOMENCLATURE</scope>
    <source>
        <strain>cv. Columbia</strain>
    </source>
</reference>
<reference key="3">
    <citation type="journal article" date="1999" name="Nature">
        <title>Sequence and analysis of chromosome 4 of the plant Arabidopsis thaliana.</title>
        <authorList>
            <person name="Mayer K.F.X."/>
            <person name="Schueller C."/>
            <person name="Wambutt R."/>
            <person name="Murphy G."/>
            <person name="Volckaert G."/>
            <person name="Pohl T."/>
            <person name="Duesterhoeft A."/>
            <person name="Stiekema W."/>
            <person name="Entian K.-D."/>
            <person name="Terryn N."/>
            <person name="Harris B."/>
            <person name="Ansorge W."/>
            <person name="Brandt P."/>
            <person name="Grivell L.A."/>
            <person name="Rieger M."/>
            <person name="Weichselgartner M."/>
            <person name="de Simone V."/>
            <person name="Obermaier B."/>
            <person name="Mache R."/>
            <person name="Mueller M."/>
            <person name="Kreis M."/>
            <person name="Delseny M."/>
            <person name="Puigdomenech P."/>
            <person name="Watson M."/>
            <person name="Schmidtheini T."/>
            <person name="Reichert B."/>
            <person name="Portetelle D."/>
            <person name="Perez-Alonso M."/>
            <person name="Boutry M."/>
            <person name="Bancroft I."/>
            <person name="Vos P."/>
            <person name="Hoheisel J."/>
            <person name="Zimmermann W."/>
            <person name="Wedler H."/>
            <person name="Ridley P."/>
            <person name="Langham S.-A."/>
            <person name="McCullagh B."/>
            <person name="Bilham L."/>
            <person name="Robben J."/>
            <person name="van der Schueren J."/>
            <person name="Grymonprez B."/>
            <person name="Chuang Y.-J."/>
            <person name="Vandenbussche F."/>
            <person name="Braeken M."/>
            <person name="Weltjens I."/>
            <person name="Voet M."/>
            <person name="Bastiaens I."/>
            <person name="Aert R."/>
            <person name="Defoor E."/>
            <person name="Weitzenegger T."/>
            <person name="Bothe G."/>
            <person name="Ramsperger U."/>
            <person name="Hilbert H."/>
            <person name="Braun M."/>
            <person name="Holzer E."/>
            <person name="Brandt A."/>
            <person name="Peters S."/>
            <person name="van Staveren M."/>
            <person name="Dirkse W."/>
            <person name="Mooijman P."/>
            <person name="Klein Lankhorst R."/>
            <person name="Rose M."/>
            <person name="Hauf J."/>
            <person name="Koetter P."/>
            <person name="Berneiser S."/>
            <person name="Hempel S."/>
            <person name="Feldpausch M."/>
            <person name="Lamberth S."/>
            <person name="Van den Daele H."/>
            <person name="De Keyser A."/>
            <person name="Buysshaert C."/>
            <person name="Gielen J."/>
            <person name="Villarroel R."/>
            <person name="De Clercq R."/>
            <person name="van Montagu M."/>
            <person name="Rogers J."/>
            <person name="Cronin A."/>
            <person name="Quail M.A."/>
            <person name="Bray-Allen S."/>
            <person name="Clark L."/>
            <person name="Doggett J."/>
            <person name="Hall S."/>
            <person name="Kay M."/>
            <person name="Lennard N."/>
            <person name="McLay K."/>
            <person name="Mayes R."/>
            <person name="Pettett A."/>
            <person name="Rajandream M.A."/>
            <person name="Lyne M."/>
            <person name="Benes V."/>
            <person name="Rechmann S."/>
            <person name="Borkova D."/>
            <person name="Bloecker H."/>
            <person name="Scharfe M."/>
            <person name="Grimm M."/>
            <person name="Loehnert T.-H."/>
            <person name="Dose S."/>
            <person name="de Haan M."/>
            <person name="Maarse A.C."/>
            <person name="Schaefer M."/>
            <person name="Mueller-Auer S."/>
            <person name="Gabel C."/>
            <person name="Fuchs M."/>
            <person name="Fartmann B."/>
            <person name="Granderath K."/>
            <person name="Dauner D."/>
            <person name="Herzl A."/>
            <person name="Neumann S."/>
            <person name="Argiriou A."/>
            <person name="Vitale D."/>
            <person name="Liguori R."/>
            <person name="Piravandi E."/>
            <person name="Massenet O."/>
            <person name="Quigley F."/>
            <person name="Clabauld G."/>
            <person name="Muendlein A."/>
            <person name="Felber R."/>
            <person name="Schnabl S."/>
            <person name="Hiller R."/>
            <person name="Schmidt W."/>
            <person name="Lecharny A."/>
            <person name="Aubourg S."/>
            <person name="Chefdor F."/>
            <person name="Cooke R."/>
            <person name="Berger C."/>
            <person name="Monfort A."/>
            <person name="Casacuberta E."/>
            <person name="Gibbons T."/>
            <person name="Weber N."/>
            <person name="Vandenbol M."/>
            <person name="Bargues M."/>
            <person name="Terol J."/>
            <person name="Torres A."/>
            <person name="Perez-Perez A."/>
            <person name="Purnelle B."/>
            <person name="Bent E."/>
            <person name="Johnson S."/>
            <person name="Tacon D."/>
            <person name="Jesse T."/>
            <person name="Heijnen L."/>
            <person name="Schwarz S."/>
            <person name="Scholler P."/>
            <person name="Heber S."/>
            <person name="Francs P."/>
            <person name="Bielke C."/>
            <person name="Frishman D."/>
            <person name="Haase D."/>
            <person name="Lemcke K."/>
            <person name="Mewes H.-W."/>
            <person name="Stocker S."/>
            <person name="Zaccaria P."/>
            <person name="Bevan M."/>
            <person name="Wilson R.K."/>
            <person name="de la Bastide M."/>
            <person name="Habermann K."/>
            <person name="Parnell L."/>
            <person name="Dedhia N."/>
            <person name="Gnoj L."/>
            <person name="Schutz K."/>
            <person name="Huang E."/>
            <person name="Spiegel L."/>
            <person name="Sekhon M."/>
            <person name="Murray J."/>
            <person name="Sheet P."/>
            <person name="Cordes M."/>
            <person name="Abu-Threideh J."/>
            <person name="Stoneking T."/>
            <person name="Kalicki J."/>
            <person name="Graves T."/>
            <person name="Harmon G."/>
            <person name="Edwards J."/>
            <person name="Latreille P."/>
            <person name="Courtney L."/>
            <person name="Cloud J."/>
            <person name="Abbott A."/>
            <person name="Scott K."/>
            <person name="Johnson D."/>
            <person name="Minx P."/>
            <person name="Bentley D."/>
            <person name="Fulton B."/>
            <person name="Miller N."/>
            <person name="Greco T."/>
            <person name="Kemp K."/>
            <person name="Kramer J."/>
            <person name="Fulton L."/>
            <person name="Mardis E."/>
            <person name="Dante M."/>
            <person name="Pepin K."/>
            <person name="Hillier L.W."/>
            <person name="Nelson J."/>
            <person name="Spieth J."/>
            <person name="Ryan E."/>
            <person name="Andrews S."/>
            <person name="Geisel C."/>
            <person name="Layman D."/>
            <person name="Du H."/>
            <person name="Ali J."/>
            <person name="Berghoff A."/>
            <person name="Jones K."/>
            <person name="Drone K."/>
            <person name="Cotton M."/>
            <person name="Joshu C."/>
            <person name="Antonoiu B."/>
            <person name="Zidanic M."/>
            <person name="Strong C."/>
            <person name="Sun H."/>
            <person name="Lamar B."/>
            <person name="Yordan C."/>
            <person name="Ma P."/>
            <person name="Zhong J."/>
            <person name="Preston R."/>
            <person name="Vil D."/>
            <person name="Shekher M."/>
            <person name="Matero A."/>
            <person name="Shah R."/>
            <person name="Swaby I.K."/>
            <person name="O'Shaughnessy A."/>
            <person name="Rodriguez M."/>
            <person name="Hoffman J."/>
            <person name="Till S."/>
            <person name="Granat S."/>
            <person name="Shohdy N."/>
            <person name="Hasegawa A."/>
            <person name="Hameed A."/>
            <person name="Lodhi M."/>
            <person name="Johnson A."/>
            <person name="Chen E."/>
            <person name="Marra M.A."/>
            <person name="Martienssen R."/>
            <person name="McCombie W.R."/>
        </authorList>
    </citation>
    <scope>NUCLEOTIDE SEQUENCE [LARGE SCALE GENOMIC DNA]</scope>
    <source>
        <strain>cv. Columbia</strain>
    </source>
</reference>
<reference key="4">
    <citation type="journal article" date="2017" name="Plant J.">
        <title>Araport11: a complete reannotation of the Arabidopsis thaliana reference genome.</title>
        <authorList>
            <person name="Cheng C.Y."/>
            <person name="Krishnakumar V."/>
            <person name="Chan A.P."/>
            <person name="Thibaud-Nissen F."/>
            <person name="Schobel S."/>
            <person name="Town C.D."/>
        </authorList>
    </citation>
    <scope>GENOME REANNOTATION</scope>
    <source>
        <strain>cv. Columbia</strain>
    </source>
</reference>
<reference key="5">
    <citation type="journal article" date="2003" name="Plant Cell">
        <title>The Arabidopsis basic/helix-loop-helix transcription factor family.</title>
        <authorList>
            <person name="Toledo-Ortiz G."/>
            <person name="Huq E."/>
            <person name="Quail P.H."/>
        </authorList>
    </citation>
    <scope>GENE FAMILY</scope>
</reference>
<reference key="6">
    <citation type="journal article" date="2003" name="Plant Cell">
        <title>Update on the basic helix-loop-helix transcription factor gene family in Arabidopsis thaliana.</title>
        <authorList>
            <person name="Bailey P.C."/>
            <person name="Martin C."/>
            <person name="Toledo-Ortiz G."/>
            <person name="Quail P.H."/>
            <person name="Huq E."/>
            <person name="Heim M.A."/>
            <person name="Jakoby M."/>
            <person name="Werber M."/>
            <person name="Weisshaar B."/>
        </authorList>
    </citation>
    <scope>GENE FAMILY</scope>
    <scope>NOMENCLATURE</scope>
</reference>
<reference key="7">
    <citation type="journal article" date="2004" name="Plant J.">
        <title>Comprehensive identification of Arabidopsis thaliana MYB transcription factors interacting with R/B-like BHLH proteins.</title>
        <authorList>
            <person name="Zimmermann I.M."/>
            <person name="Heim M.A."/>
            <person name="Weisshaar B."/>
            <person name="Uhrig J.F."/>
        </authorList>
    </citation>
    <scope>FUNCTION</scope>
    <scope>INTERACTION WITH MYB75/PAP1; MYB90/PAP2; MYB4; MYB5; MYB6; MYB23; MYB82; MYB113; MYB114; TT2; MYB0/GL1 AND MYB66/WER</scope>
</reference>
<keyword id="KW-0010">Activator</keyword>
<keyword id="KW-0025">Alternative splicing</keyword>
<keyword id="KW-0238">DNA-binding</keyword>
<keyword id="KW-0539">Nucleus</keyword>
<keyword id="KW-1185">Reference proteome</keyword>
<keyword id="KW-0804">Transcription</keyword>
<keyword id="KW-0805">Transcription regulation</keyword>
<comment type="function">
    <text evidence="4">Trancsription activator, when associated with MYB75/PAP1 or MYB90/PAP2.</text>
</comment>
<comment type="subunit">
    <text evidence="4 6">Homodimer (Probable). Interacts with MYB75/PAP1, MYB90/PAP2, MYB4, MYB5, MYB6, MYB23, MYB82, MYB113, MYB114, TT2, MYB0/GL1, and MYB66/WER.</text>
</comment>
<comment type="interaction">
    <interactant intactId="EBI-1546379">
        <id>Q8W2F1</id>
    </interactant>
    <interactant intactId="EBI-1545177">
        <id>Q9FE25</id>
        <label>MYB75</label>
    </interactant>
    <organismsDiffer>false</organismsDiffer>
    <experiments>3</experiments>
</comment>
<comment type="interaction">
    <interactant intactId="EBI-1546379">
        <id>Q8W2F1</id>
    </interactant>
    <interactant intactId="EBI-1545203">
        <id>Q9ZTC3</id>
        <label>MYB90</label>
    </interactant>
    <organismsDiffer>false</organismsDiffer>
    <experiments>2</experiments>
</comment>
<comment type="subcellular location">
    <subcellularLocation>
        <location evidence="1">Nucleus</location>
    </subcellularLocation>
</comment>
<comment type="alternative products">
    <event type="alternative splicing"/>
    <isoform>
        <id>Q8W2F1-1</id>
        <name>1</name>
        <sequence type="displayed"/>
    </isoform>
    <text>A number of isoforms are produced. According to EST sequences.</text>
</comment>
<comment type="tissue specificity">
    <text evidence="3 5">Mostly expressed in developing seeds. Also detected in stems and leaves.</text>
</comment>
<comment type="induction">
    <text evidence="3">By cold, UV, flagellin, jasmonic acid (JA), and salicylic acid (SA) treatments.</text>
</comment>
<comment type="sequence caution" evidence="6">
    <conflict type="erroneous gene model prediction">
        <sequence resource="EMBL-CDS" id="AAC13623"/>
    </conflict>
</comment>
<comment type="sequence caution" evidence="6">
    <conflict type="erroneous gene model prediction">
        <sequence resource="EMBL-CDS" id="CAB80857"/>
    </conflict>
</comment>
<feature type="chain" id="PRO_0000358729" description="Transcription factor MYC1">
    <location>
        <begin position="1"/>
        <end position="526"/>
    </location>
</feature>
<feature type="domain" description="bHLH" evidence="1">
    <location>
        <begin position="333"/>
        <end position="382"/>
    </location>
</feature>
<feature type="region of interest" description="Disordered" evidence="2">
    <location>
        <begin position="330"/>
        <end position="351"/>
    </location>
</feature>
<feature type="compositionally biased region" description="Polar residues" evidence="2">
    <location>
        <begin position="332"/>
        <end position="341"/>
    </location>
</feature>
<feature type="sequence conflict" description="In Ref. 1; BAA11933." evidence="6" ref="1">
    <original>ND</original>
    <variation>TA</variation>
    <location>
        <begin position="272"/>
        <end position="273"/>
    </location>
</feature>
<proteinExistence type="evidence at protein level"/>